<accession>Q8GT66</accession>
<accession>Q9SC41</accession>
<protein>
    <recommendedName>
        <fullName>Protein TIC 40, chloroplastic</fullName>
    </recommendedName>
    <alternativeName>
        <fullName>Translocon at the inner envelope membrane of chloroplasts 40</fullName>
        <shortName>PsTIC40</shortName>
    </alternativeName>
</protein>
<proteinExistence type="evidence at protein level"/>
<organism>
    <name type="scientific">Pisum sativum</name>
    <name type="common">Garden pea</name>
    <name type="synonym">Lathyrus oleraceus</name>
    <dbReference type="NCBI Taxonomy" id="3888"/>
    <lineage>
        <taxon>Eukaryota</taxon>
        <taxon>Viridiplantae</taxon>
        <taxon>Streptophyta</taxon>
        <taxon>Embryophyta</taxon>
        <taxon>Tracheophyta</taxon>
        <taxon>Spermatophyta</taxon>
        <taxon>Magnoliopsida</taxon>
        <taxon>eudicotyledons</taxon>
        <taxon>Gunneridae</taxon>
        <taxon>Pentapetalae</taxon>
        <taxon>rosids</taxon>
        <taxon>fabids</taxon>
        <taxon>Fabales</taxon>
        <taxon>Fabaceae</taxon>
        <taxon>Papilionoideae</taxon>
        <taxon>50 kb inversion clade</taxon>
        <taxon>NPAAA clade</taxon>
        <taxon>Hologalegina</taxon>
        <taxon>IRL clade</taxon>
        <taxon>Fabeae</taxon>
        <taxon>Pisum</taxon>
    </lineage>
</organism>
<sequence length="436" mass="47172">MENLNLALVSSPKPLLLGHSSSKNVFSGRKSFTFGTFRVSANSSSSHVTRAASKSHQNLKSVQGKVNAHDFASISSSNGQETTSVGVSPQLSPPPPSTVGSPLFWIGIGVGFSALFSVVASRVKKYAMQQAFKSMMGQMNTQNNPFDSGAFSSGPPFPFPMPSASGPATPAGFAGNQSQATSTRSASQSTVTVDIPATKVEAAAPAPDINVKEEVEVKNEPKKSAFVDVSPEETVQKNAFERFKDVDESSSFKEARAPAEASQNGTPFKQGFGDSPSSPSERKSALSVDALEKMMEDPTVQQMVYPYLPEEMRNPSTFKWMMQNPEYRQQLEAMLNNMGGGTEWDSRMMDTLKNFDLNSPDVKQQFDQIGLSPQEVISKIMANPDVAMAFQNPRVQAAIMDCSQNPMSIVKYQNDKEVMDVFNKISELFPGVSGPP</sequence>
<comment type="function">
    <text evidence="3 6">Involved in protein precursor import into chloroplasts. Part of the motor complex consisting of a co-chaperone (TIC40) and a chaperone (HSP93) associated with the import channel (TIC110). Causes the release of bound transit peptides from TIC110 and stimulates ATP hydrolysis by HSP93. Involved in reinsertion of proteins from the chloroplast stroma into the inner membrane.</text>
</comment>
<comment type="subunit">
    <text evidence="3 4 5 6">Part of the Tic complex. Interacts with HSP93, TIC110, TIC62 and TOC75.</text>
</comment>
<comment type="subcellular location">
    <subcellularLocation>
        <location evidence="3 5">Plastid</location>
        <location evidence="3 5">Chloroplast inner membrane</location>
        <topology evidence="3 5">Single-pass membrane protein</topology>
    </subcellularLocation>
</comment>
<comment type="induction">
    <text evidence="7">Down-regulated by cold stress.</text>
</comment>
<comment type="domain">
    <text>The STI1 2 domain (373-412) has a stimulatory effect on HSP93 ATP hydrolysis.</text>
</comment>
<comment type="miscellaneous">
    <text>Inserts into the inner envelope membrane from the stroma after import from the cytoplasm. The transit peptide undergoes a two-step processing. The initial cleavage to generate the intermediate found in the stroma is mediated by the stromal processing peptidase (SPP) while the final processing step by a signal peptidase I-type (SPase I), possibly PLSP1, requires association with the inner membrane.</text>
</comment>
<dbReference type="EMBL" id="AJ243758">
    <property type="protein sequence ID" value="CAB50925.1"/>
    <property type="molecule type" value="mRNA"/>
</dbReference>
<dbReference type="EMBL" id="AY157668">
    <property type="protein sequence ID" value="AAN75219.1"/>
    <property type="molecule type" value="mRNA"/>
</dbReference>
<dbReference type="SMR" id="Q8GT66"/>
<dbReference type="IntAct" id="Q8GT66">
    <property type="interactions" value="2"/>
</dbReference>
<dbReference type="TCDB" id="3.A.9.1.1">
    <property type="family name" value="the chloroplast envelope protein translocase (cept or tic-toc) family"/>
</dbReference>
<dbReference type="GO" id="GO:0009706">
    <property type="term" value="C:chloroplast inner membrane"/>
    <property type="evidence" value="ECO:0007669"/>
    <property type="project" value="UniProtKB-SubCell"/>
</dbReference>
<dbReference type="GO" id="GO:0009535">
    <property type="term" value="C:chloroplast thylakoid membrane"/>
    <property type="evidence" value="ECO:0007669"/>
    <property type="project" value="TreeGrafter"/>
</dbReference>
<dbReference type="GO" id="GO:0009658">
    <property type="term" value="P:chloroplast organization"/>
    <property type="evidence" value="ECO:0007669"/>
    <property type="project" value="TreeGrafter"/>
</dbReference>
<dbReference type="GO" id="GO:0045037">
    <property type="term" value="P:protein import into chloroplast stroma"/>
    <property type="evidence" value="ECO:0007669"/>
    <property type="project" value="TreeGrafter"/>
</dbReference>
<dbReference type="FunFam" id="1.10.260.100:FF:000008">
    <property type="entry name" value="Protein TIC 40, chloroplastic"/>
    <property type="match status" value="1"/>
</dbReference>
<dbReference type="Gene3D" id="1.10.260.100">
    <property type="match status" value="1"/>
</dbReference>
<dbReference type="InterPro" id="IPR041243">
    <property type="entry name" value="STI1/HOP_DP"/>
</dbReference>
<dbReference type="InterPro" id="IPR006636">
    <property type="entry name" value="STI1_HS-bd"/>
</dbReference>
<dbReference type="PANTHER" id="PTHR47296">
    <property type="entry name" value="PROTEIN TIC 40, CHLOROPLASTIC"/>
    <property type="match status" value="1"/>
</dbReference>
<dbReference type="PANTHER" id="PTHR47296:SF1">
    <property type="entry name" value="PROTEIN TIC 40, CHLOROPLASTIC"/>
    <property type="match status" value="1"/>
</dbReference>
<dbReference type="Pfam" id="PF17830">
    <property type="entry name" value="STI1-HOP_DP"/>
    <property type="match status" value="1"/>
</dbReference>
<dbReference type="SMART" id="SM00727">
    <property type="entry name" value="STI1"/>
    <property type="match status" value="2"/>
</dbReference>
<name>TIC40_PEA</name>
<evidence type="ECO:0000255" key="1"/>
<evidence type="ECO:0000256" key="2">
    <source>
        <dbReference type="SAM" id="MobiDB-lite"/>
    </source>
</evidence>
<evidence type="ECO:0000269" key="3">
    <source>
    </source>
</evidence>
<evidence type="ECO:0000269" key="4">
    <source>
    </source>
</evidence>
<evidence type="ECO:0000269" key="5">
    <source>
    </source>
</evidence>
<evidence type="ECO:0000269" key="6">
    <source>
    </source>
</evidence>
<evidence type="ECO:0000269" key="7">
    <source>
    </source>
</evidence>
<evidence type="ECO:0000305" key="8"/>
<reference key="1">
    <citation type="journal article" date="1999" name="J. Biol. Chem.">
        <title>Tic40, a new 'old' subunit of the chloroplast protein import translocon.</title>
        <authorList>
            <person name="Stahl T."/>
            <person name="Glockmann C."/>
            <person name="Soll J."/>
            <person name="Heins L."/>
        </authorList>
    </citation>
    <scope>NUCLEOTIDE SEQUENCE [MRNA]</scope>
    <scope>PROTEIN SEQUENCE OF 73-98</scope>
    <scope>FUNCTION</scope>
    <scope>SUBCELLULAR LOCATION</scope>
    <scope>INTERACTION WITH TIC110</scope>
    <source>
        <strain>cv. Golf</strain>
        <tissue>Leaf</tissue>
    </source>
</reference>
<reference key="2">
    <citation type="journal article" date="2003" name="EMBO J.">
        <title>Tic40, a membrane-anchored co-chaperone homolog in the chloroplast protein translocon.</title>
        <authorList>
            <person name="Chou M.L."/>
            <person name="Fitzpatrick L.M."/>
            <person name="Tu S.L."/>
            <person name="Budziszewski G."/>
            <person name="Potter-Lewis S."/>
            <person name="Akita M."/>
            <person name="Levin J.Z."/>
            <person name="Keegstra K."/>
            <person name="Li H.M."/>
        </authorList>
    </citation>
    <scope>NUCLEOTIDE SEQUENCE [MRNA]</scope>
    <scope>SUBCELLULAR LOCATION</scope>
    <scope>TOPOLOGY</scope>
    <scope>INTERACTION WITH HSP93; TIC110 AND TOC75</scope>
    <source>
        <strain>cv. Little Marvel</strain>
    </source>
</reference>
<reference key="3">
    <citation type="journal article" date="2002" name="EMBO J.">
        <title>Protein import into chloroplasts involves redox-regulated proteins.</title>
        <authorList>
            <person name="Kuechler M."/>
            <person name="Decker S."/>
            <person name="Hoermann F."/>
            <person name="Soll J."/>
            <person name="Heins L."/>
        </authorList>
    </citation>
    <scope>INTERACTION WITH TIC62</scope>
</reference>
<reference key="4">
    <citation type="journal article" date="2006" name="J. Cell Biol.">
        <title>Stimulation of transit-peptide release and ATP hydrolysis by a cochaperone during protein import into chloroplasts.</title>
        <authorList>
            <person name="Chou M.L."/>
            <person name="Chu C.C."/>
            <person name="Chen L.J."/>
            <person name="Akita M."/>
            <person name="Li H.M."/>
        </authorList>
    </citation>
    <scope>FUNCTION</scope>
    <scope>INTERACTION WITH TIC110 AND HSP93</scope>
</reference>
<reference key="5">
    <citation type="journal article" date="2009" name="Plant Physiol.">
        <title>Role of temperature stress on chloroplast biogenesis and protein import in pea.</title>
        <authorList>
            <person name="Dutta S."/>
            <person name="Mohanty S."/>
            <person name="Tripathy B.C."/>
        </authorList>
    </citation>
    <scope>INDUCTION BY COLD</scope>
</reference>
<reference key="6">
    <citation type="journal article" date="2010" name="Biochim. Biophys. Acta">
        <title>Protein import into chloroplasts: the Tic complex and its regulation.</title>
        <authorList>
            <person name="Kovacs-Bogdan E."/>
            <person name="Soll J."/>
            <person name="Bolter B."/>
        </authorList>
    </citation>
    <scope>REVIEW</scope>
</reference>
<feature type="transit peptide" description="Chloroplast" evidence="1">
    <location>
        <begin position="1"/>
        <end position="39"/>
    </location>
</feature>
<feature type="transit peptide" description="Chloroplast; inner membrane" evidence="1">
    <location>
        <begin position="40"/>
        <end position="72"/>
    </location>
</feature>
<feature type="chain" id="PRO_0000413674" description="Protein TIC 40, chloroplastic">
    <location>
        <begin position="73"/>
        <end position="436"/>
    </location>
</feature>
<feature type="topological domain" description="Chloroplast intermembrane" evidence="1">
    <location>
        <begin position="73"/>
        <end position="98"/>
    </location>
</feature>
<feature type="transmembrane region" description="Helical" evidence="1">
    <location>
        <begin position="99"/>
        <end position="119"/>
    </location>
</feature>
<feature type="topological domain" description="Stromal" evidence="1">
    <location>
        <begin position="120"/>
        <end position="436"/>
    </location>
</feature>
<feature type="domain" description="STI1 1">
    <location>
        <begin position="297"/>
        <end position="331"/>
    </location>
</feature>
<feature type="domain" description="STI1 2">
    <location>
        <begin position="373"/>
        <end position="412"/>
    </location>
</feature>
<feature type="region of interest" description="Disordered" evidence="2">
    <location>
        <begin position="74"/>
        <end position="95"/>
    </location>
</feature>
<feature type="region of interest" description="Disordered" evidence="2">
    <location>
        <begin position="160"/>
        <end position="191"/>
    </location>
</feature>
<feature type="region of interest" description="Disordered" evidence="2">
    <location>
        <begin position="245"/>
        <end position="285"/>
    </location>
</feature>
<feature type="compositionally biased region" description="Polar residues" evidence="2">
    <location>
        <begin position="74"/>
        <end position="90"/>
    </location>
</feature>
<feature type="compositionally biased region" description="Low complexity" evidence="2">
    <location>
        <begin position="177"/>
        <end position="191"/>
    </location>
</feature>
<feature type="compositionally biased region" description="Basic and acidic residues" evidence="2">
    <location>
        <begin position="245"/>
        <end position="257"/>
    </location>
</feature>
<feature type="sequence conflict" description="In Ref. 1; CAB50925." evidence="8" ref="1">
    <original>G</original>
    <variation>R</variation>
    <location>
        <position position="28"/>
    </location>
</feature>
<feature type="sequence conflict" description="In Ref. 1; CAB50925." evidence="8" ref="1">
    <original>D</original>
    <variation>S</variation>
    <location>
        <position position="70"/>
    </location>
</feature>
<feature type="sequence conflict" description="In Ref. 1; CAB50925." evidence="8" ref="1">
    <original>S</original>
    <variation>G</variation>
    <location>
        <position position="277"/>
    </location>
</feature>
<gene>
    <name type="primary">TIC40</name>
</gene>
<keyword id="KW-0150">Chloroplast</keyword>
<keyword id="KW-0903">Direct protein sequencing</keyword>
<keyword id="KW-0472">Membrane</keyword>
<keyword id="KW-0934">Plastid</keyword>
<keyword id="KW-1001">Plastid inner membrane</keyword>
<keyword id="KW-0653">Protein transport</keyword>
<keyword id="KW-0677">Repeat</keyword>
<keyword id="KW-0809">Transit peptide</keyword>
<keyword id="KW-0812">Transmembrane</keyword>
<keyword id="KW-1133">Transmembrane helix</keyword>
<keyword id="KW-0813">Transport</keyword>